<dbReference type="EMBL" id="AAFI02000056">
    <property type="protein sequence ID" value="EAL65626.1"/>
    <property type="molecule type" value="Genomic_DNA"/>
</dbReference>
<dbReference type="RefSeq" id="XP_638983.1">
    <property type="nucleotide sequence ID" value="XM_633891.1"/>
</dbReference>
<dbReference type="FunCoup" id="Q54QP0">
    <property type="interactions" value="259"/>
</dbReference>
<dbReference type="STRING" id="44689.Q54QP0"/>
<dbReference type="PaxDb" id="44689-DDB0238413"/>
<dbReference type="EnsemblProtists" id="EAL65626">
    <property type="protein sequence ID" value="EAL65626"/>
    <property type="gene ID" value="DDB_G0283719"/>
</dbReference>
<dbReference type="GeneID" id="8624229"/>
<dbReference type="KEGG" id="ddi:DDB_G0283719"/>
<dbReference type="dictyBase" id="DDB_G0283719"/>
<dbReference type="VEuPathDB" id="AmoebaDB:DDB_G0283719"/>
<dbReference type="eggNOG" id="KOG1972">
    <property type="taxonomic scope" value="Eukaryota"/>
</dbReference>
<dbReference type="HOGENOM" id="CLU_259974_0_0_1"/>
<dbReference type="InParanoid" id="Q54QP0"/>
<dbReference type="OMA" id="AYRNNTE"/>
<dbReference type="PhylomeDB" id="Q54QP0"/>
<dbReference type="PRO" id="PR:Q54QP0"/>
<dbReference type="Proteomes" id="UP000002195">
    <property type="component" value="Chromosome 4"/>
</dbReference>
<dbReference type="GO" id="GO:0016607">
    <property type="term" value="C:nuclear speck"/>
    <property type="evidence" value="ECO:0000250"/>
    <property type="project" value="UniProtKB"/>
</dbReference>
<dbReference type="GO" id="GO:0048255">
    <property type="term" value="P:mRNA stabilization"/>
    <property type="evidence" value="ECO:0000250"/>
    <property type="project" value="UniProtKB"/>
</dbReference>
<dbReference type="GO" id="GO:1902369">
    <property type="term" value="P:negative regulation of RNA catabolic process"/>
    <property type="evidence" value="ECO:0000318"/>
    <property type="project" value="GO_Central"/>
</dbReference>
<dbReference type="GO" id="GO:0031048">
    <property type="term" value="P:regulatory ncRNA-mediated heterochromatin formation"/>
    <property type="evidence" value="ECO:0000318"/>
    <property type="project" value="GO_Central"/>
</dbReference>
<dbReference type="GO" id="GO:0006396">
    <property type="term" value="P:RNA processing"/>
    <property type="evidence" value="ECO:0007669"/>
    <property type="project" value="InterPro"/>
</dbReference>
<dbReference type="Gene3D" id="1.25.40.10">
    <property type="entry name" value="Tetratricopeptide repeat domain"/>
    <property type="match status" value="2"/>
</dbReference>
<dbReference type="InterPro" id="IPR003107">
    <property type="entry name" value="HAT"/>
</dbReference>
<dbReference type="InterPro" id="IPR013633">
    <property type="entry name" value="NRDE-2"/>
</dbReference>
<dbReference type="InterPro" id="IPR011990">
    <property type="entry name" value="TPR-like_helical_dom_sf"/>
</dbReference>
<dbReference type="PANTHER" id="PTHR13471:SF0">
    <property type="entry name" value="NUCLEAR EXOSOME REGULATOR NRDE2"/>
    <property type="match status" value="1"/>
</dbReference>
<dbReference type="PANTHER" id="PTHR13471">
    <property type="entry name" value="TETRATRICOPEPTIDE-LIKE HELICAL"/>
    <property type="match status" value="1"/>
</dbReference>
<dbReference type="Pfam" id="PF08424">
    <property type="entry name" value="NRDE-2"/>
    <property type="match status" value="1"/>
</dbReference>
<dbReference type="SMART" id="SM00386">
    <property type="entry name" value="HAT"/>
    <property type="match status" value="4"/>
</dbReference>
<dbReference type="SUPFAM" id="SSF48452">
    <property type="entry name" value="TPR-like"/>
    <property type="match status" value="1"/>
</dbReference>
<feature type="chain" id="PRO_0000343143" description="Nuclear exosome regulator NRDE2">
    <location>
        <begin position="1"/>
        <end position="1320"/>
    </location>
</feature>
<feature type="repeat" description="HAT 1">
    <location>
        <begin position="348"/>
        <end position="380"/>
    </location>
</feature>
<feature type="repeat" description="HAT 2">
    <location>
        <begin position="428"/>
        <end position="467"/>
    </location>
</feature>
<feature type="repeat" description="HAT 3">
    <location>
        <begin position="864"/>
        <end position="899"/>
    </location>
</feature>
<feature type="repeat" description="HAT 4">
    <location>
        <begin position="1221"/>
        <end position="1254"/>
    </location>
</feature>
<feature type="repeat" description="HAT 5">
    <location>
        <begin position="1256"/>
        <end position="1288"/>
    </location>
</feature>
<feature type="region of interest" description="Disordered" evidence="3">
    <location>
        <begin position="1"/>
        <end position="55"/>
    </location>
</feature>
<feature type="region of interest" description="Disordered" evidence="3">
    <location>
        <begin position="74"/>
        <end position="203"/>
    </location>
</feature>
<feature type="region of interest" description="Disordered" evidence="3">
    <location>
        <begin position="598"/>
        <end position="644"/>
    </location>
</feature>
<feature type="region of interest" description="Disordered" evidence="3">
    <location>
        <begin position="676"/>
        <end position="716"/>
    </location>
</feature>
<feature type="region of interest" description="Disordered" evidence="3">
    <location>
        <begin position="1056"/>
        <end position="1078"/>
    </location>
</feature>
<feature type="coiled-coil region" evidence="2">
    <location>
        <begin position="146"/>
        <end position="186"/>
    </location>
</feature>
<feature type="coiled-coil region" evidence="2">
    <location>
        <begin position="591"/>
        <end position="699"/>
    </location>
</feature>
<feature type="compositionally biased region" description="Acidic residues" evidence="3">
    <location>
        <begin position="14"/>
        <end position="26"/>
    </location>
</feature>
<feature type="compositionally biased region" description="Low complexity" evidence="3">
    <location>
        <begin position="34"/>
        <end position="48"/>
    </location>
</feature>
<feature type="compositionally biased region" description="Basic and acidic residues" evidence="3">
    <location>
        <begin position="96"/>
        <end position="106"/>
    </location>
</feature>
<feature type="compositionally biased region" description="Acidic residues" evidence="3">
    <location>
        <begin position="118"/>
        <end position="129"/>
    </location>
</feature>
<feature type="compositionally biased region" description="Basic residues" evidence="3">
    <location>
        <begin position="170"/>
        <end position="184"/>
    </location>
</feature>
<feature type="compositionally biased region" description="Low complexity" evidence="3">
    <location>
        <begin position="598"/>
        <end position="640"/>
    </location>
</feature>
<feature type="compositionally biased region" description="Low complexity" evidence="3">
    <location>
        <begin position="703"/>
        <end position="713"/>
    </location>
</feature>
<reference key="1">
    <citation type="journal article" date="2005" name="Nature">
        <title>The genome of the social amoeba Dictyostelium discoideum.</title>
        <authorList>
            <person name="Eichinger L."/>
            <person name="Pachebat J.A."/>
            <person name="Gloeckner G."/>
            <person name="Rajandream M.A."/>
            <person name="Sucgang R."/>
            <person name="Berriman M."/>
            <person name="Song J."/>
            <person name="Olsen R."/>
            <person name="Szafranski K."/>
            <person name="Xu Q."/>
            <person name="Tunggal B."/>
            <person name="Kummerfeld S."/>
            <person name="Madera M."/>
            <person name="Konfortov B.A."/>
            <person name="Rivero F."/>
            <person name="Bankier A.T."/>
            <person name="Lehmann R."/>
            <person name="Hamlin N."/>
            <person name="Davies R."/>
            <person name="Gaudet P."/>
            <person name="Fey P."/>
            <person name="Pilcher K."/>
            <person name="Chen G."/>
            <person name="Saunders D."/>
            <person name="Sodergren E.J."/>
            <person name="Davis P."/>
            <person name="Kerhornou A."/>
            <person name="Nie X."/>
            <person name="Hall N."/>
            <person name="Anjard C."/>
            <person name="Hemphill L."/>
            <person name="Bason N."/>
            <person name="Farbrother P."/>
            <person name="Desany B."/>
            <person name="Just E."/>
            <person name="Morio T."/>
            <person name="Rost R."/>
            <person name="Churcher C.M."/>
            <person name="Cooper J."/>
            <person name="Haydock S."/>
            <person name="van Driessche N."/>
            <person name="Cronin A."/>
            <person name="Goodhead I."/>
            <person name="Muzny D.M."/>
            <person name="Mourier T."/>
            <person name="Pain A."/>
            <person name="Lu M."/>
            <person name="Harper D."/>
            <person name="Lindsay R."/>
            <person name="Hauser H."/>
            <person name="James K.D."/>
            <person name="Quiles M."/>
            <person name="Madan Babu M."/>
            <person name="Saito T."/>
            <person name="Buchrieser C."/>
            <person name="Wardroper A."/>
            <person name="Felder M."/>
            <person name="Thangavelu M."/>
            <person name="Johnson D."/>
            <person name="Knights A."/>
            <person name="Loulseged H."/>
            <person name="Mungall K.L."/>
            <person name="Oliver K."/>
            <person name="Price C."/>
            <person name="Quail M.A."/>
            <person name="Urushihara H."/>
            <person name="Hernandez J."/>
            <person name="Rabbinowitsch E."/>
            <person name="Steffen D."/>
            <person name="Sanders M."/>
            <person name="Ma J."/>
            <person name="Kohara Y."/>
            <person name="Sharp S."/>
            <person name="Simmonds M.N."/>
            <person name="Spiegler S."/>
            <person name="Tivey A."/>
            <person name="Sugano S."/>
            <person name="White B."/>
            <person name="Walker D."/>
            <person name="Woodward J.R."/>
            <person name="Winckler T."/>
            <person name="Tanaka Y."/>
            <person name="Shaulsky G."/>
            <person name="Schleicher M."/>
            <person name="Weinstock G.M."/>
            <person name="Rosenthal A."/>
            <person name="Cox E.C."/>
            <person name="Chisholm R.L."/>
            <person name="Gibbs R.A."/>
            <person name="Loomis W.F."/>
            <person name="Platzer M."/>
            <person name="Kay R.R."/>
            <person name="Williams J.G."/>
            <person name="Dear P.H."/>
            <person name="Noegel A.A."/>
            <person name="Barrell B.G."/>
            <person name="Kuspa A."/>
        </authorList>
    </citation>
    <scope>NUCLEOTIDE SEQUENCE [LARGE SCALE GENOMIC DNA]</scope>
    <source>
        <strain>AX4</strain>
    </source>
</reference>
<accession>Q54QP0</accession>
<organism>
    <name type="scientific">Dictyostelium discoideum</name>
    <name type="common">Social amoeba</name>
    <dbReference type="NCBI Taxonomy" id="44689"/>
    <lineage>
        <taxon>Eukaryota</taxon>
        <taxon>Amoebozoa</taxon>
        <taxon>Evosea</taxon>
        <taxon>Eumycetozoa</taxon>
        <taxon>Dictyostelia</taxon>
        <taxon>Dictyosteliales</taxon>
        <taxon>Dictyosteliaceae</taxon>
        <taxon>Dictyostelium</taxon>
    </lineage>
</organism>
<comment type="function">
    <text evidence="1">Protein of the nuclear speckles that regulates RNA exosomal degradation.</text>
</comment>
<comment type="subcellular location">
    <subcellularLocation>
        <location evidence="1">Nucleus speckle</location>
    </subcellularLocation>
</comment>
<comment type="similarity">
    <text evidence="4">Belongs to the NRDE2 family.</text>
</comment>
<protein>
    <recommendedName>
        <fullName evidence="4">Nuclear exosome regulator NRDE2</fullName>
    </recommendedName>
    <alternativeName>
        <fullName evidence="4">Protein NRDE2 homolog</fullName>
    </alternativeName>
</protein>
<sequence length="1320" mass="154029">MSHSKKSLFAAYSNDDDGDGDGDDLYLEEHQKVTSTNTPSSSWFSNSSYKEKQENVIDTVTSKTQLKRASDFFNLDSDNTFSSPPPPSSSPPLYSKTEKKNNDKVKIIMKKRSFIDSSSDDNSDDDDNDSSSSDQDSSDDDSGGFTYNRKKYKKEQQQQENEENEENERKNRKKEKKKKRKDKKFKNDDKSMMIISNENSENYSDNSSYFIEKTGDKVFSSRTSTPNYNYDNSFILGMSDYKIGFSKKEGYQIEPISLTSFNKQQINNRYFTKPSSSSSSSSQSQQQLITVITKRKEIEEIEKVKPISNIKDPSKSNDDEIKLIVLNENNHDNDDDDNDDDDNETLERKTLKKNSELNKLVEQYPNNIEYWIDLVKFQENFQQFSRNVNKSKTSMYEKQLSIYRNSLLHNPDSEILTIEYLKLASKLWDQQKVLDLWNKVLSSSSSSSSSSIISEKLWKEYIEFCLSNFNDFKIEKIKETIITIIRKMLVKRRSFKVKDYNFMENISNLEESILQFISQLSKLLNQAGFSERVIGIYQSLIEFNCFEPIQLSNETQATLLKEFKSYWSSLDYPKIGNPNSIGWSKSFTILLNNSINNNNNKNNNNNNNNNNNNNNNNNNNNNNNNNNNNNNNNNNNNNNNMDLDNLDNLSIEEIEKLLKEQEDQENQDNENIFNITHKSKDLNEDDDNENNNNNQEEQEDNDSNSNDNDNNNNKFNTWGKKEIELDELKWKPLDINNNLEVNKEVNENDTERVVLFNDFYELLFRFVKEENKLELVFQFLEFLGVPISLLDDKIQPRYSFYHPQRRDSINSIHNENIISLLFKDLKQQPSPPSPSPEYPNWFKTFDKFSNNNNNSQNLLGLSDDKIKFIDSIYKLILENSNGIKLKEKLYVSYIMFKASIDINDAKVYTKSLCEKFKNLIYFDIFASLELKSGKTQQARTIYQTTCFYINQLINQQAQQQQQQLQIDLVYREYLFMELNLIYQTIEKDPQILKRFIKSNHKPIELFFTPLHILQCYLDGNYKQYSSSTFNLNTINQFLNQLNLKFLQKLQQQQQQQQQNSSSSSSSSSSSSSSSSSSSSSVDFLLCYCIFELLSNGFDGFLILFKRITSSSTNDYLKIFSIQHELLTIRCIDMVTKIAPLIGTDPKRIKNLIIDSLNQYYDHPKLLSLFLNWESKNQLINRIRIYFDLNSINNINNNNGGDDGGSSIFWLFAIKFESNRIGAAQRIKSLFEKAISTTQKHNIIFWKLYIEFEINRGRLKIAKSIYYRSIKQLPFSKQIWLLPFTNSKLSLIFNNQEFNEIINLINEKGIRLRILTPKVSN</sequence>
<keyword id="KW-0175">Coiled coil</keyword>
<keyword id="KW-0539">Nucleus</keyword>
<keyword id="KW-1185">Reference proteome</keyword>
<keyword id="KW-0677">Repeat</keyword>
<proteinExistence type="inferred from homology"/>
<name>NRDE2_DICDI</name>
<gene>
    <name type="primary">nrde2</name>
    <name type="ORF">DDB_G0283719</name>
</gene>
<evidence type="ECO:0000250" key="1">
    <source>
        <dbReference type="UniProtKB" id="Q9H7Z3"/>
    </source>
</evidence>
<evidence type="ECO:0000255" key="2"/>
<evidence type="ECO:0000256" key="3">
    <source>
        <dbReference type="SAM" id="MobiDB-lite"/>
    </source>
</evidence>
<evidence type="ECO:0000305" key="4"/>